<protein>
    <recommendedName>
        <fullName>Crustacyanin-A1 subunit</fullName>
    </recommendedName>
</protein>
<feature type="chain" id="PRO_0000201009" description="Crustacyanin-A1 subunit">
    <location>
        <begin position="1"/>
        <end position="181"/>
    </location>
</feature>
<feature type="disulfide bond">
    <location>
        <begin position="12"/>
        <end position="121"/>
    </location>
</feature>
<feature type="disulfide bond">
    <location>
        <begin position="51"/>
        <end position="173"/>
    </location>
</feature>
<feature type="disulfide bond">
    <location>
        <begin position="117"/>
        <end position="150"/>
    </location>
</feature>
<feature type="strand" evidence="4">
    <location>
        <begin position="7"/>
        <end position="11"/>
    </location>
</feature>
<feature type="helix" evidence="4">
    <location>
        <begin position="17"/>
        <end position="24"/>
    </location>
</feature>
<feature type="helix" evidence="4">
    <location>
        <begin position="25"/>
        <end position="27"/>
    </location>
</feature>
<feature type="helix" evidence="4">
    <location>
        <begin position="28"/>
        <end position="31"/>
    </location>
</feature>
<feature type="strand" evidence="4">
    <location>
        <begin position="33"/>
        <end position="41"/>
    </location>
</feature>
<feature type="strand" evidence="4">
    <location>
        <begin position="48"/>
        <end position="58"/>
    </location>
</feature>
<feature type="strand" evidence="4">
    <location>
        <begin position="63"/>
        <end position="71"/>
    </location>
</feature>
<feature type="strand" evidence="4">
    <location>
        <begin position="74"/>
        <end position="85"/>
    </location>
</feature>
<feature type="strand" evidence="4">
    <location>
        <begin position="91"/>
        <end position="97"/>
    </location>
</feature>
<feature type="strand" evidence="3">
    <location>
        <begin position="98"/>
        <end position="100"/>
    </location>
</feature>
<feature type="strand" evidence="4">
    <location>
        <begin position="102"/>
        <end position="110"/>
    </location>
</feature>
<feature type="strand" evidence="4">
    <location>
        <begin position="112"/>
        <end position="123"/>
    </location>
</feature>
<feature type="strand" evidence="4">
    <location>
        <begin position="127"/>
        <end position="141"/>
    </location>
</feature>
<feature type="helix" evidence="4">
    <location>
        <begin position="144"/>
        <end position="156"/>
    </location>
</feature>
<feature type="helix" evidence="4">
    <location>
        <begin position="161"/>
        <end position="163"/>
    </location>
</feature>
<feature type="strand" evidence="4">
    <location>
        <begin position="164"/>
        <end position="166"/>
    </location>
</feature>
<feature type="strand" evidence="3">
    <location>
        <begin position="170"/>
        <end position="173"/>
    </location>
</feature>
<feature type="helix" evidence="4">
    <location>
        <begin position="175"/>
        <end position="178"/>
    </location>
</feature>
<keyword id="KW-0002">3D-structure</keyword>
<keyword id="KW-0157">Chromophore</keyword>
<keyword id="KW-1015">Disulfide bond</keyword>
<keyword id="KW-0608">Pigment</keyword>
<keyword id="KW-0964">Secreted</keyword>
<keyword id="KW-0813">Transport</keyword>
<proteinExistence type="evidence at protein level"/>
<organism>
    <name type="scientific">Homarus gammarus</name>
    <name type="common">European lobster</name>
    <name type="synonym">Homarus vulgaris</name>
    <dbReference type="NCBI Taxonomy" id="6707"/>
    <lineage>
        <taxon>Eukaryota</taxon>
        <taxon>Metazoa</taxon>
        <taxon>Ecdysozoa</taxon>
        <taxon>Arthropoda</taxon>
        <taxon>Crustacea</taxon>
        <taxon>Multicrustacea</taxon>
        <taxon>Malacostraca</taxon>
        <taxon>Eumalacostraca</taxon>
        <taxon>Eucarida</taxon>
        <taxon>Decapoda</taxon>
        <taxon>Pleocyemata</taxon>
        <taxon>Astacidea</taxon>
        <taxon>Nephropoidea</taxon>
        <taxon>Nephropidae</taxon>
        <taxon>Homarus</taxon>
    </lineage>
</organism>
<accession>P58989</accession>
<evidence type="ECO:0000269" key="1">
    <source>
    </source>
</evidence>
<evidence type="ECO:0000305" key="2"/>
<evidence type="ECO:0007829" key="3">
    <source>
        <dbReference type="PDB" id="1GKA"/>
    </source>
</evidence>
<evidence type="ECO:0007829" key="4">
    <source>
        <dbReference type="PDB" id="1S44"/>
    </source>
</evidence>
<sequence>DKIPNFVVPGKCASVDRNKLWAEQTPNRNSYAGVWYQFALTNNPYQLIEKCVRNEYSFDGKQFVIKSTGIAYDGNLLKRNGKLYPNPFGEPHLSIDYENSFAAPLVILETDYSNYACLYSCIDYNFGYHSDFSFIFSRSANLADQYVKKCEAAFKNINVDTTRFVKTVQGSSCPYDTQKTV</sequence>
<comment type="function">
    <text>Binds the carotenoid astaxanthin (AXT) which provides the blue coloration to the carapace of the lobster.</text>
</comment>
<comment type="subunit">
    <text evidence="1">Oligomer; Can form dimers (beta-crustacyanin); or complexes of 16 subunits (alpha-crustacyanin). There are five types of subunits: A1, A2, A3, C1 and C2.</text>
</comment>
<comment type="subcellular location">
    <subcellularLocation>
        <location>Secreted</location>
        <location>Extracellular space</location>
    </subcellularLocation>
</comment>
<comment type="tissue specificity">
    <text>Found in the carapace.</text>
</comment>
<comment type="similarity">
    <text evidence="2">Belongs to the calycin superfamily. Lipocalin family.</text>
</comment>
<comment type="online information" name="Protein Spotlight">
    <link uri="https://www.proteinspotlight.org/back_issues/026"/>
    <text>Squeeze me - Issue 26 of September 2002</text>
</comment>
<reference key="1">
    <citation type="journal article" date="2001" name="Acta Crystallogr. D">
        <title>Structure of lobster apocrustacyanin A1 using softer X-rays.</title>
        <authorList>
            <person name="Cianci M."/>
            <person name="Rizkallah P.J."/>
            <person name="Olczak A."/>
            <person name="Raftery J."/>
            <person name="Chayen N.E."/>
            <person name="Zagalsky P.F."/>
            <person name="Helliwell J.R."/>
        </authorList>
    </citation>
    <scope>X-RAY CRYSTALLOGRAPHY (1.15 ANGSTROMS) OF HOMODIMER</scope>
</reference>
<reference key="2">
    <citation type="journal article" date="2002" name="Proc. Natl. Acad. Sci. U.S.A.">
        <title>The molecular basis of the coloration mechanism in lobster shell: beta-crustacyanin at 3.2-A resolution.</title>
        <authorList>
            <person name="Cianci M."/>
            <person name="Rizkallah P.J."/>
            <person name="Olczak A."/>
            <person name="Raftery J."/>
            <person name="Chayen N.E."/>
            <person name="Zagalsky P.F."/>
            <person name="Helliwell J.R."/>
        </authorList>
    </citation>
    <scope>X-RAY CRYSTALLOGRAPHY (3.2 ANGSTROMS) OF HETERODIMER OF A1 AND A3 IN COMPLEX WITH ASTAXANTHIN</scope>
</reference>
<dbReference type="PDB" id="1GKA">
    <property type="method" value="X-ray"/>
    <property type="resolution" value="3.23 A"/>
    <property type="chains" value="A=2-181"/>
</dbReference>
<dbReference type="PDB" id="1S44">
    <property type="method" value="X-ray"/>
    <property type="resolution" value="1.60 A"/>
    <property type="chains" value="A/B=2-181"/>
</dbReference>
<dbReference type="PDBsum" id="1GKA"/>
<dbReference type="PDBsum" id="1S44"/>
<dbReference type="SMR" id="P58989"/>
<dbReference type="MINT" id="P58989"/>
<dbReference type="EvolutionaryTrace" id="P58989"/>
<dbReference type="GO" id="GO:0005737">
    <property type="term" value="C:cytoplasm"/>
    <property type="evidence" value="ECO:0007669"/>
    <property type="project" value="TreeGrafter"/>
</dbReference>
<dbReference type="GO" id="GO:0005576">
    <property type="term" value="C:extracellular region"/>
    <property type="evidence" value="ECO:0007669"/>
    <property type="project" value="UniProtKB-SubCell"/>
</dbReference>
<dbReference type="GO" id="GO:0031409">
    <property type="term" value="F:pigment binding"/>
    <property type="evidence" value="ECO:0007669"/>
    <property type="project" value="UniProtKB-KW"/>
</dbReference>
<dbReference type="GO" id="GO:0006629">
    <property type="term" value="P:lipid metabolic process"/>
    <property type="evidence" value="ECO:0007669"/>
    <property type="project" value="TreeGrafter"/>
</dbReference>
<dbReference type="GO" id="GO:0000302">
    <property type="term" value="P:response to reactive oxygen species"/>
    <property type="evidence" value="ECO:0007669"/>
    <property type="project" value="TreeGrafter"/>
</dbReference>
<dbReference type="CDD" id="cd19436">
    <property type="entry name" value="lipocalin_crustacyanin"/>
    <property type="match status" value="1"/>
</dbReference>
<dbReference type="Gene3D" id="2.40.128.20">
    <property type="match status" value="1"/>
</dbReference>
<dbReference type="InterPro" id="IPR012674">
    <property type="entry name" value="Calycin"/>
</dbReference>
<dbReference type="InterPro" id="IPR003057">
    <property type="entry name" value="Invtbrt_color"/>
</dbReference>
<dbReference type="InterPro" id="IPR022271">
    <property type="entry name" value="Lipocalin_ApoD"/>
</dbReference>
<dbReference type="InterPro" id="IPR000566">
    <property type="entry name" value="Lipocln_cytosolic_FA-bd_dom"/>
</dbReference>
<dbReference type="PANTHER" id="PTHR10612">
    <property type="entry name" value="APOLIPOPROTEIN D"/>
    <property type="match status" value="1"/>
</dbReference>
<dbReference type="PANTHER" id="PTHR10612:SF34">
    <property type="entry name" value="APOLIPOPROTEIN D"/>
    <property type="match status" value="1"/>
</dbReference>
<dbReference type="Pfam" id="PF00061">
    <property type="entry name" value="Lipocalin"/>
    <property type="match status" value="1"/>
</dbReference>
<dbReference type="PIRSF" id="PIRSF036893">
    <property type="entry name" value="Lipocalin_ApoD"/>
    <property type="match status" value="1"/>
</dbReference>
<dbReference type="PRINTS" id="PR01273">
    <property type="entry name" value="INVTBRTCOLOR"/>
</dbReference>
<dbReference type="PRINTS" id="PR00179">
    <property type="entry name" value="LIPOCALIN"/>
</dbReference>
<dbReference type="SUPFAM" id="SSF50814">
    <property type="entry name" value="Lipocalins"/>
    <property type="match status" value="1"/>
</dbReference>
<name>CRA1_HOMGA</name>